<evidence type="ECO:0000255" key="1">
    <source>
        <dbReference type="HAMAP-Rule" id="MF_00111"/>
    </source>
</evidence>
<comment type="function">
    <text evidence="1">Cell wall formation. Adds enolpyruvyl to UDP-N-acetylglucosamine.</text>
</comment>
<comment type="catalytic activity">
    <reaction evidence="1">
        <text>phosphoenolpyruvate + UDP-N-acetyl-alpha-D-glucosamine = UDP-N-acetyl-3-O-(1-carboxyvinyl)-alpha-D-glucosamine + phosphate</text>
        <dbReference type="Rhea" id="RHEA:18681"/>
        <dbReference type="ChEBI" id="CHEBI:43474"/>
        <dbReference type="ChEBI" id="CHEBI:57705"/>
        <dbReference type="ChEBI" id="CHEBI:58702"/>
        <dbReference type="ChEBI" id="CHEBI:68483"/>
        <dbReference type="EC" id="2.5.1.7"/>
    </reaction>
</comment>
<comment type="pathway">
    <text evidence="1">Cell wall biogenesis; peptidoglycan biosynthesis.</text>
</comment>
<comment type="subcellular location">
    <subcellularLocation>
        <location evidence="1">Cytoplasm</location>
    </subcellularLocation>
</comment>
<comment type="similarity">
    <text evidence="1">Belongs to the EPSP synthase family. MurA subfamily.</text>
</comment>
<proteinExistence type="inferred from homology"/>
<gene>
    <name evidence="1" type="primary">murA</name>
    <name type="ordered locus">VP2658</name>
</gene>
<organism>
    <name type="scientific">Vibrio parahaemolyticus serotype O3:K6 (strain RIMD 2210633)</name>
    <dbReference type="NCBI Taxonomy" id="223926"/>
    <lineage>
        <taxon>Bacteria</taxon>
        <taxon>Pseudomonadati</taxon>
        <taxon>Pseudomonadota</taxon>
        <taxon>Gammaproteobacteria</taxon>
        <taxon>Vibrionales</taxon>
        <taxon>Vibrionaceae</taxon>
        <taxon>Vibrio</taxon>
    </lineage>
</organism>
<dbReference type="EC" id="2.5.1.7" evidence="1"/>
<dbReference type="EMBL" id="BA000031">
    <property type="protein sequence ID" value="BAC60921.1"/>
    <property type="molecule type" value="Genomic_DNA"/>
</dbReference>
<dbReference type="RefSeq" id="NP_799037.1">
    <property type="nucleotide sequence ID" value="NC_004603.1"/>
</dbReference>
<dbReference type="RefSeq" id="WP_005455110.1">
    <property type="nucleotide sequence ID" value="NC_004603.1"/>
</dbReference>
<dbReference type="SMR" id="Q87LF4"/>
<dbReference type="GeneID" id="1190203"/>
<dbReference type="KEGG" id="vpa:VP2658"/>
<dbReference type="PATRIC" id="fig|223926.6.peg.2553"/>
<dbReference type="eggNOG" id="COG0766">
    <property type="taxonomic scope" value="Bacteria"/>
</dbReference>
<dbReference type="HOGENOM" id="CLU_027387_0_0_6"/>
<dbReference type="UniPathway" id="UPA00219"/>
<dbReference type="Proteomes" id="UP000002493">
    <property type="component" value="Chromosome 1"/>
</dbReference>
<dbReference type="GO" id="GO:0005737">
    <property type="term" value="C:cytoplasm"/>
    <property type="evidence" value="ECO:0007669"/>
    <property type="project" value="UniProtKB-SubCell"/>
</dbReference>
<dbReference type="GO" id="GO:0008760">
    <property type="term" value="F:UDP-N-acetylglucosamine 1-carboxyvinyltransferase activity"/>
    <property type="evidence" value="ECO:0007669"/>
    <property type="project" value="UniProtKB-UniRule"/>
</dbReference>
<dbReference type="GO" id="GO:0051301">
    <property type="term" value="P:cell division"/>
    <property type="evidence" value="ECO:0007669"/>
    <property type="project" value="UniProtKB-KW"/>
</dbReference>
<dbReference type="GO" id="GO:0071555">
    <property type="term" value="P:cell wall organization"/>
    <property type="evidence" value="ECO:0007669"/>
    <property type="project" value="UniProtKB-KW"/>
</dbReference>
<dbReference type="GO" id="GO:0009252">
    <property type="term" value="P:peptidoglycan biosynthetic process"/>
    <property type="evidence" value="ECO:0007669"/>
    <property type="project" value="UniProtKB-UniRule"/>
</dbReference>
<dbReference type="GO" id="GO:0008360">
    <property type="term" value="P:regulation of cell shape"/>
    <property type="evidence" value="ECO:0007669"/>
    <property type="project" value="UniProtKB-KW"/>
</dbReference>
<dbReference type="GO" id="GO:0019277">
    <property type="term" value="P:UDP-N-acetylgalactosamine biosynthetic process"/>
    <property type="evidence" value="ECO:0007669"/>
    <property type="project" value="InterPro"/>
</dbReference>
<dbReference type="CDD" id="cd01555">
    <property type="entry name" value="UdpNAET"/>
    <property type="match status" value="1"/>
</dbReference>
<dbReference type="FunFam" id="3.65.10.10:FF:000001">
    <property type="entry name" value="UDP-N-acetylglucosamine 1-carboxyvinyltransferase"/>
    <property type="match status" value="1"/>
</dbReference>
<dbReference type="Gene3D" id="3.65.10.10">
    <property type="entry name" value="Enolpyruvate transferase domain"/>
    <property type="match status" value="2"/>
</dbReference>
<dbReference type="HAMAP" id="MF_00111">
    <property type="entry name" value="MurA"/>
    <property type="match status" value="1"/>
</dbReference>
<dbReference type="InterPro" id="IPR001986">
    <property type="entry name" value="Enolpyruvate_Tfrase_dom"/>
</dbReference>
<dbReference type="InterPro" id="IPR036968">
    <property type="entry name" value="Enolpyruvate_Tfrase_sf"/>
</dbReference>
<dbReference type="InterPro" id="IPR050068">
    <property type="entry name" value="MurA_subfamily"/>
</dbReference>
<dbReference type="InterPro" id="IPR013792">
    <property type="entry name" value="RNA3'P_cycl/enolpyr_Trfase_a/b"/>
</dbReference>
<dbReference type="InterPro" id="IPR005750">
    <property type="entry name" value="UDP_GlcNAc_COvinyl_MurA"/>
</dbReference>
<dbReference type="NCBIfam" id="TIGR01072">
    <property type="entry name" value="murA"/>
    <property type="match status" value="1"/>
</dbReference>
<dbReference type="NCBIfam" id="NF006873">
    <property type="entry name" value="PRK09369.1"/>
    <property type="match status" value="1"/>
</dbReference>
<dbReference type="PANTHER" id="PTHR43783">
    <property type="entry name" value="UDP-N-ACETYLGLUCOSAMINE 1-CARBOXYVINYLTRANSFERASE"/>
    <property type="match status" value="1"/>
</dbReference>
<dbReference type="PANTHER" id="PTHR43783:SF1">
    <property type="entry name" value="UDP-N-ACETYLGLUCOSAMINE 1-CARBOXYVINYLTRANSFERASE"/>
    <property type="match status" value="1"/>
</dbReference>
<dbReference type="Pfam" id="PF00275">
    <property type="entry name" value="EPSP_synthase"/>
    <property type="match status" value="1"/>
</dbReference>
<dbReference type="SUPFAM" id="SSF55205">
    <property type="entry name" value="EPT/RTPC-like"/>
    <property type="match status" value="1"/>
</dbReference>
<accession>Q87LF4</accession>
<keyword id="KW-0131">Cell cycle</keyword>
<keyword id="KW-0132">Cell division</keyword>
<keyword id="KW-0133">Cell shape</keyword>
<keyword id="KW-0961">Cell wall biogenesis/degradation</keyword>
<keyword id="KW-0963">Cytoplasm</keyword>
<keyword id="KW-0573">Peptidoglycan synthesis</keyword>
<keyword id="KW-0670">Pyruvate</keyword>
<keyword id="KW-0808">Transferase</keyword>
<name>MURA_VIBPA</name>
<reference key="1">
    <citation type="journal article" date="2003" name="Lancet">
        <title>Genome sequence of Vibrio parahaemolyticus: a pathogenic mechanism distinct from that of V. cholerae.</title>
        <authorList>
            <person name="Makino K."/>
            <person name="Oshima K."/>
            <person name="Kurokawa K."/>
            <person name="Yokoyama K."/>
            <person name="Uda T."/>
            <person name="Tagomori K."/>
            <person name="Iijima Y."/>
            <person name="Najima M."/>
            <person name="Nakano M."/>
            <person name="Yamashita A."/>
            <person name="Kubota Y."/>
            <person name="Kimura S."/>
            <person name="Yasunaga T."/>
            <person name="Honda T."/>
            <person name="Shinagawa H."/>
            <person name="Hattori M."/>
            <person name="Iida T."/>
        </authorList>
    </citation>
    <scope>NUCLEOTIDE SEQUENCE [LARGE SCALE GENOMIC DNA]</scope>
    <source>
        <strain>RIMD 2210633</strain>
    </source>
</reference>
<feature type="chain" id="PRO_0000178949" description="UDP-N-acetylglucosamine 1-carboxyvinyltransferase">
    <location>
        <begin position="1"/>
        <end position="418"/>
    </location>
</feature>
<feature type="active site" description="Proton donor" evidence="1">
    <location>
        <position position="116"/>
    </location>
</feature>
<feature type="binding site" evidence="1">
    <location>
        <begin position="23"/>
        <end position="24"/>
    </location>
    <ligand>
        <name>phosphoenolpyruvate</name>
        <dbReference type="ChEBI" id="CHEBI:58702"/>
    </ligand>
</feature>
<feature type="binding site" evidence="1">
    <location>
        <position position="92"/>
    </location>
    <ligand>
        <name>UDP-N-acetyl-alpha-D-glucosamine</name>
        <dbReference type="ChEBI" id="CHEBI:57705"/>
    </ligand>
</feature>
<feature type="binding site" evidence="1">
    <location>
        <begin position="121"/>
        <end position="125"/>
    </location>
    <ligand>
        <name>UDP-N-acetyl-alpha-D-glucosamine</name>
        <dbReference type="ChEBI" id="CHEBI:57705"/>
    </ligand>
</feature>
<feature type="binding site" evidence="1">
    <location>
        <begin position="161"/>
        <end position="164"/>
    </location>
    <ligand>
        <name>UDP-N-acetyl-alpha-D-glucosamine</name>
        <dbReference type="ChEBI" id="CHEBI:57705"/>
    </ligand>
</feature>
<feature type="binding site" evidence="1">
    <location>
        <position position="306"/>
    </location>
    <ligand>
        <name>UDP-N-acetyl-alpha-D-glucosamine</name>
        <dbReference type="ChEBI" id="CHEBI:57705"/>
    </ligand>
</feature>
<feature type="binding site" evidence="1">
    <location>
        <position position="328"/>
    </location>
    <ligand>
        <name>UDP-N-acetyl-alpha-D-glucosamine</name>
        <dbReference type="ChEBI" id="CHEBI:57705"/>
    </ligand>
</feature>
<feature type="modified residue" description="2-(S-cysteinyl)pyruvic acid O-phosphothioketal" evidence="1">
    <location>
        <position position="116"/>
    </location>
</feature>
<protein>
    <recommendedName>
        <fullName evidence="1">UDP-N-acetylglucosamine 1-carboxyvinyltransferase</fullName>
        <ecNumber evidence="1">2.5.1.7</ecNumber>
    </recommendedName>
    <alternativeName>
        <fullName evidence="1">Enoylpyruvate transferase</fullName>
    </alternativeName>
    <alternativeName>
        <fullName evidence="1">UDP-N-acetylglucosamine enolpyruvyl transferase</fullName>
        <shortName evidence="1">EPT</shortName>
    </alternativeName>
</protein>
<sequence>MEKFRVIGSDKPLVGEVTISGAKNAALPILFASILAEEPVEVANVPHLRDIDTTMELLKRLGAKVSRNGSVHVDPSSINEYCAPYDLVKTMRASIWALGPLVARFGQGQVSLPGGCAIGARPVDLHITGLEQLGATITLEDGYVKAEVDGRLKGAHIVMDKVSVGATITIMCAAALAEGTTTLDNAAREPEIVDTADFLNKLGAKISGAGTDTITIEGVERLGGGKHSVVADRIETGTFLVAAAVSGGKVVCRNTNGHLLEAVLAKLEEAGALVETGEDWISVDMTDRELKAVSIRTAPHPGFPTDMQAQFTLLNMMAKGGGVITETIFENRFMHVPELMRMGAKAEIEGNTVICGDVESLSGAQVMATDLRASASLVIAGCIAKGETIVDRIYHIDRGYDKIENKLAALGANIERVS</sequence>